<comment type="function">
    <text evidence="1">Catalyzes the hydrolytic deamination of adenine to hypoxanthine. Plays an important role in the purine salvage pathway and in nitrogen catabolism.</text>
</comment>
<comment type="catalytic activity">
    <reaction evidence="1">
        <text>adenine + H2O + H(+) = hypoxanthine + NH4(+)</text>
        <dbReference type="Rhea" id="RHEA:23688"/>
        <dbReference type="ChEBI" id="CHEBI:15377"/>
        <dbReference type="ChEBI" id="CHEBI:15378"/>
        <dbReference type="ChEBI" id="CHEBI:16708"/>
        <dbReference type="ChEBI" id="CHEBI:17368"/>
        <dbReference type="ChEBI" id="CHEBI:28938"/>
        <dbReference type="EC" id="3.5.4.2"/>
    </reaction>
</comment>
<comment type="cofactor">
    <cofactor evidence="1">
        <name>Zn(2+)</name>
        <dbReference type="ChEBI" id="CHEBI:29105"/>
    </cofactor>
    <text evidence="1">Binds 1 zinc ion per subunit.</text>
</comment>
<comment type="similarity">
    <text evidence="1">Belongs to the metallo-dependent hydrolases superfamily. Adenosine and AMP deaminases family. Adenine deaminase type 2 subfamily.</text>
</comment>
<feature type="chain" id="PRO_1000017683" description="Adenine deaminase">
    <location>
        <begin position="1"/>
        <end position="317"/>
    </location>
</feature>
<feature type="active site" description="Proton donor" evidence="1">
    <location>
        <position position="197"/>
    </location>
</feature>
<feature type="binding site" evidence="1">
    <location>
        <position position="14"/>
    </location>
    <ligand>
        <name>Zn(2+)</name>
        <dbReference type="ChEBI" id="CHEBI:29105"/>
        <note>catalytic</note>
    </ligand>
</feature>
<feature type="binding site" evidence="1">
    <location>
        <position position="16"/>
    </location>
    <ligand>
        <name>Zn(2+)</name>
        <dbReference type="ChEBI" id="CHEBI:29105"/>
        <note>catalytic</note>
    </ligand>
</feature>
<feature type="binding site" evidence="1">
    <location>
        <position position="194"/>
    </location>
    <ligand>
        <name>Zn(2+)</name>
        <dbReference type="ChEBI" id="CHEBI:29105"/>
        <note>catalytic</note>
    </ligand>
</feature>
<feature type="binding site" evidence="1">
    <location>
        <position position="275"/>
    </location>
    <ligand>
        <name>Zn(2+)</name>
        <dbReference type="ChEBI" id="CHEBI:29105"/>
        <note>catalytic</note>
    </ligand>
</feature>
<feature type="binding site" evidence="1">
    <location>
        <position position="276"/>
    </location>
    <ligand>
        <name>substrate</name>
    </ligand>
</feature>
<feature type="site" description="Important for catalytic activity" evidence="1">
    <location>
        <position position="218"/>
    </location>
</feature>
<evidence type="ECO:0000255" key="1">
    <source>
        <dbReference type="HAMAP-Rule" id="MF_01962"/>
    </source>
</evidence>
<name>ADE_PSEPF</name>
<reference key="1">
    <citation type="journal article" date="2009" name="Genome Biol.">
        <title>Genomic and genetic analyses of diversity and plant interactions of Pseudomonas fluorescens.</title>
        <authorList>
            <person name="Silby M.W."/>
            <person name="Cerdeno-Tarraga A.M."/>
            <person name="Vernikos G.S."/>
            <person name="Giddens S.R."/>
            <person name="Jackson R.W."/>
            <person name="Preston G.M."/>
            <person name="Zhang X.-X."/>
            <person name="Moon C.D."/>
            <person name="Gehrig S.M."/>
            <person name="Godfrey S.A.C."/>
            <person name="Knight C.G."/>
            <person name="Malone J.G."/>
            <person name="Robinson Z."/>
            <person name="Spiers A.J."/>
            <person name="Harris S."/>
            <person name="Challis G.L."/>
            <person name="Yaxley A.M."/>
            <person name="Harris D."/>
            <person name="Seeger K."/>
            <person name="Murphy L."/>
            <person name="Rutter S."/>
            <person name="Squares R."/>
            <person name="Quail M.A."/>
            <person name="Saunders E."/>
            <person name="Mavromatis K."/>
            <person name="Brettin T.S."/>
            <person name="Bentley S.D."/>
            <person name="Hothersall J."/>
            <person name="Stephens E."/>
            <person name="Thomas C.M."/>
            <person name="Parkhill J."/>
            <person name="Levy S.B."/>
            <person name="Rainey P.B."/>
            <person name="Thomson N.R."/>
        </authorList>
    </citation>
    <scope>NUCLEOTIDE SEQUENCE [LARGE SCALE GENOMIC DNA]</scope>
    <source>
        <strain>Pf0-1</strain>
    </source>
</reference>
<keyword id="KW-0378">Hydrolase</keyword>
<keyword id="KW-0479">Metal-binding</keyword>
<keyword id="KW-0546">Nucleotide metabolism</keyword>
<keyword id="KW-0862">Zinc</keyword>
<dbReference type="EC" id="3.5.4.2" evidence="1"/>
<dbReference type="EMBL" id="CP000094">
    <property type="protein sequence ID" value="ABA72415.1"/>
    <property type="molecule type" value="Genomic_DNA"/>
</dbReference>
<dbReference type="RefSeq" id="WP_011332312.1">
    <property type="nucleotide sequence ID" value="NC_007492.2"/>
</dbReference>
<dbReference type="SMR" id="Q3KIJ1"/>
<dbReference type="KEGG" id="pfo:Pfl01_0671"/>
<dbReference type="eggNOG" id="COG1816">
    <property type="taxonomic scope" value="Bacteria"/>
</dbReference>
<dbReference type="HOGENOM" id="CLU_039228_7_0_6"/>
<dbReference type="Proteomes" id="UP000002704">
    <property type="component" value="Chromosome"/>
</dbReference>
<dbReference type="GO" id="GO:0005829">
    <property type="term" value="C:cytosol"/>
    <property type="evidence" value="ECO:0007669"/>
    <property type="project" value="TreeGrafter"/>
</dbReference>
<dbReference type="GO" id="GO:0000034">
    <property type="term" value="F:adenine deaminase activity"/>
    <property type="evidence" value="ECO:0007669"/>
    <property type="project" value="UniProtKB-UniRule"/>
</dbReference>
<dbReference type="GO" id="GO:0008270">
    <property type="term" value="F:zinc ion binding"/>
    <property type="evidence" value="ECO:0007669"/>
    <property type="project" value="UniProtKB-UniRule"/>
</dbReference>
<dbReference type="GO" id="GO:0006146">
    <property type="term" value="P:adenine catabolic process"/>
    <property type="evidence" value="ECO:0007669"/>
    <property type="project" value="UniProtKB-UniRule"/>
</dbReference>
<dbReference type="GO" id="GO:0043103">
    <property type="term" value="P:hypoxanthine salvage"/>
    <property type="evidence" value="ECO:0007669"/>
    <property type="project" value="UniProtKB-UniRule"/>
</dbReference>
<dbReference type="GO" id="GO:0009117">
    <property type="term" value="P:nucleotide metabolic process"/>
    <property type="evidence" value="ECO:0007669"/>
    <property type="project" value="UniProtKB-KW"/>
</dbReference>
<dbReference type="CDD" id="cd01320">
    <property type="entry name" value="ADA"/>
    <property type="match status" value="1"/>
</dbReference>
<dbReference type="FunFam" id="3.20.20.140:FF:000039">
    <property type="entry name" value="Adenine deaminase"/>
    <property type="match status" value="1"/>
</dbReference>
<dbReference type="Gene3D" id="3.20.20.140">
    <property type="entry name" value="Metal-dependent hydrolases"/>
    <property type="match status" value="1"/>
</dbReference>
<dbReference type="HAMAP" id="MF_01962">
    <property type="entry name" value="Adenine_deaminase"/>
    <property type="match status" value="1"/>
</dbReference>
<dbReference type="InterPro" id="IPR001365">
    <property type="entry name" value="A_deaminase_dom"/>
</dbReference>
<dbReference type="InterPro" id="IPR028892">
    <property type="entry name" value="ADE"/>
</dbReference>
<dbReference type="InterPro" id="IPR006330">
    <property type="entry name" value="Ado/ade_deaminase"/>
</dbReference>
<dbReference type="InterPro" id="IPR032466">
    <property type="entry name" value="Metal_Hydrolase"/>
</dbReference>
<dbReference type="NCBIfam" id="TIGR01430">
    <property type="entry name" value="aden_deam"/>
    <property type="match status" value="1"/>
</dbReference>
<dbReference type="NCBIfam" id="NF006850">
    <property type="entry name" value="PRK09358.1-6"/>
    <property type="match status" value="1"/>
</dbReference>
<dbReference type="PANTHER" id="PTHR43114">
    <property type="entry name" value="ADENINE DEAMINASE"/>
    <property type="match status" value="1"/>
</dbReference>
<dbReference type="PANTHER" id="PTHR43114:SF6">
    <property type="entry name" value="ADENINE DEAMINASE"/>
    <property type="match status" value="1"/>
</dbReference>
<dbReference type="Pfam" id="PF00962">
    <property type="entry name" value="A_deaminase"/>
    <property type="match status" value="1"/>
</dbReference>
<dbReference type="SUPFAM" id="SSF51556">
    <property type="entry name" value="Metallo-dependent hydrolases"/>
    <property type="match status" value="1"/>
</dbReference>
<organism>
    <name type="scientific">Pseudomonas fluorescens (strain Pf0-1)</name>
    <dbReference type="NCBI Taxonomy" id="205922"/>
    <lineage>
        <taxon>Bacteria</taxon>
        <taxon>Pseudomonadati</taxon>
        <taxon>Pseudomonadota</taxon>
        <taxon>Gammaproteobacteria</taxon>
        <taxon>Pseudomonadales</taxon>
        <taxon>Pseudomonadaceae</taxon>
        <taxon>Pseudomonas</taxon>
    </lineage>
</organism>
<proteinExistence type="inferred from homology"/>
<sequence>MYDWLNALPKAELHLHLEGSLEPELLFALAERNKIALPWSDVETLRKAYAFNNLQEFLDLYYQGADVLRTSQDFYDLTWAYLLRCKEQNVIHTEPFFDPQTHTDRGIPFEVVLNGIAAALKDGEQQLGITSGLILSFLRHLSEDEAQKTLDQALPFRDAFVAVGLDSSEMGHPPSKFQRVFDRARHEGFLTVAHAGEEGPPEYIWEAIDLLKIQRIDHGVRAIEDERLMQRIIDEQIPLTVCPLSNTKLCVFDHMSQHNILDMLERGVKVTVNSDDPAYFGGYVTENFHALHEHLGMTQDQAKRLAQNSLDARLVKP</sequence>
<protein>
    <recommendedName>
        <fullName evidence="1">Adenine deaminase</fullName>
        <shortName evidence="1">ADE</shortName>
        <ecNumber evidence="1">3.5.4.2</ecNumber>
    </recommendedName>
    <alternativeName>
        <fullName evidence="1">Adenine aminohydrolase</fullName>
        <shortName evidence="1">AAH</shortName>
    </alternativeName>
</protein>
<gene>
    <name type="ordered locus">Pfl01_0671</name>
</gene>
<accession>Q3KIJ1</accession>